<organism>
    <name type="scientific">Bos taurus</name>
    <name type="common">Bovine</name>
    <dbReference type="NCBI Taxonomy" id="9913"/>
    <lineage>
        <taxon>Eukaryota</taxon>
        <taxon>Metazoa</taxon>
        <taxon>Chordata</taxon>
        <taxon>Craniata</taxon>
        <taxon>Vertebrata</taxon>
        <taxon>Euteleostomi</taxon>
        <taxon>Mammalia</taxon>
        <taxon>Eutheria</taxon>
        <taxon>Laurasiatheria</taxon>
        <taxon>Artiodactyla</taxon>
        <taxon>Ruminantia</taxon>
        <taxon>Pecora</taxon>
        <taxon>Bovidae</taxon>
        <taxon>Bovinae</taxon>
        <taxon>Bos</taxon>
    </lineage>
</organism>
<evidence type="ECO:0000250" key="1"/>
<evidence type="ECO:0000250" key="2">
    <source>
        <dbReference type="UniProtKB" id="P05496"/>
    </source>
</evidence>
<evidence type="ECO:0000255" key="3"/>
<evidence type="ECO:0000269" key="4">
    <source>
    </source>
</evidence>
<evidence type="ECO:0000269" key="5">
    <source>
    </source>
</evidence>
<evidence type="ECO:0000269" key="6">
    <source>
    </source>
</evidence>
<evidence type="ECO:0000269" key="7">
    <source ref="3"/>
</evidence>
<evidence type="ECO:0000305" key="8"/>
<evidence type="ECO:0007829" key="9">
    <source>
        <dbReference type="PDB" id="2XND"/>
    </source>
</evidence>
<feature type="transit peptide" description="Mitochondrion" evidence="5 7">
    <location>
        <begin position="1"/>
        <end position="61"/>
    </location>
</feature>
<feature type="chain" id="PRO_0000002556" description="ATP synthase F(0) complex subunit C1, mitochondrial">
    <location>
        <begin position="62"/>
        <end position="136"/>
    </location>
</feature>
<feature type="transmembrane region" description="Helical" evidence="3">
    <location>
        <begin position="77"/>
        <end position="97"/>
    </location>
</feature>
<feature type="transmembrane region" description="Helical" evidence="3">
    <location>
        <begin position="112"/>
        <end position="132"/>
    </location>
</feature>
<feature type="site" description="Reversibly protonated during proton transport" evidence="1">
    <location>
        <position position="119"/>
    </location>
</feature>
<feature type="modified residue" description="N6,N6,N6-trimethyllysine" evidence="2">
    <location>
        <position position="104"/>
    </location>
</feature>
<feature type="turn" evidence="9">
    <location>
        <begin position="64"/>
        <end position="73"/>
    </location>
</feature>
<feature type="helix" evidence="9">
    <location>
        <begin position="74"/>
        <end position="79"/>
    </location>
</feature>
<feature type="helix" evidence="9">
    <location>
        <begin position="80"/>
        <end position="96"/>
    </location>
</feature>
<feature type="strand" evidence="9">
    <location>
        <begin position="97"/>
        <end position="99"/>
    </location>
</feature>
<feature type="helix" evidence="9">
    <location>
        <begin position="103"/>
        <end position="107"/>
    </location>
</feature>
<feature type="helix" evidence="9">
    <location>
        <begin position="112"/>
        <end position="131"/>
    </location>
</feature>
<proteinExistence type="evidence at protein level"/>
<sequence length="136" mass="14223">MQTTGALLISPALIRSCTRGLIRPVSASFLSRPEIQSVQPSYSSGPLQVARREFQTSVVSRDIDTAAKFIGAGAATVGVAGSGAGIGTVFGSLIIGYARNPSLKQQLFSYAILGFALSEAMGLFCLMVAFLILFAM</sequence>
<dbReference type="EMBL" id="X05218">
    <property type="protein sequence ID" value="CAA28845.1"/>
    <property type="molecule type" value="mRNA"/>
</dbReference>
<dbReference type="EMBL" id="BC102952">
    <property type="protein sequence ID" value="AAI02953.1"/>
    <property type="molecule type" value="mRNA"/>
</dbReference>
<dbReference type="PIR" id="A24578">
    <property type="entry name" value="LWBOA"/>
</dbReference>
<dbReference type="RefSeq" id="NP_788822.1">
    <property type="nucleotide sequence ID" value="NM_176649.3"/>
</dbReference>
<dbReference type="RefSeq" id="XP_005220574.1">
    <property type="nucleotide sequence ID" value="XM_005220517.3"/>
</dbReference>
<dbReference type="RefSeq" id="XP_005220575.1">
    <property type="nucleotide sequence ID" value="XM_005220518.5"/>
</dbReference>
<dbReference type="RefSeq" id="XP_005220576.1">
    <property type="nucleotide sequence ID" value="XM_005220519.5"/>
</dbReference>
<dbReference type="PDB" id="2XND">
    <property type="method" value="X-ray"/>
    <property type="resolution" value="3.50 A"/>
    <property type="chains" value="J/K/L/M/N/O/P/Q=63-134"/>
</dbReference>
<dbReference type="PDB" id="5ARA">
    <property type="method" value="EM"/>
    <property type="resolution" value="6.70 A"/>
    <property type="chains" value="J/K/L/M/N/O/P/Q=63-134"/>
</dbReference>
<dbReference type="PDB" id="5ARE">
    <property type="method" value="EM"/>
    <property type="resolution" value="7.40 A"/>
    <property type="chains" value="J/K/L/M/N/O/P/Q=63-134"/>
</dbReference>
<dbReference type="PDB" id="5ARH">
    <property type="method" value="EM"/>
    <property type="resolution" value="7.20 A"/>
    <property type="chains" value="J/K/L/M/N/O/P/Q=63-134"/>
</dbReference>
<dbReference type="PDB" id="5ARI">
    <property type="method" value="EM"/>
    <property type="resolution" value="7.40 A"/>
    <property type="chains" value="J/K/L/M/N/O/P/Q=63-134"/>
</dbReference>
<dbReference type="PDB" id="5FIJ">
    <property type="method" value="EM"/>
    <property type="resolution" value="7.40 A"/>
    <property type="chains" value="J/K/L/M/N/O/P/Q=63-134"/>
</dbReference>
<dbReference type="PDB" id="5FIK">
    <property type="method" value="EM"/>
    <property type="resolution" value="6.40 A"/>
    <property type="chains" value="J/K/L/M/N/O/P/Q=63-134"/>
</dbReference>
<dbReference type="PDB" id="5FIL">
    <property type="method" value="EM"/>
    <property type="resolution" value="7.10 A"/>
    <property type="chains" value="J/K/L/M/N/O/P/Q=63-134"/>
</dbReference>
<dbReference type="PDB" id="6ZBB">
    <property type="method" value="EM"/>
    <property type="resolution" value="3.61 A"/>
    <property type="chains" value="K/L/M/N/O/P/Q/R=62-136"/>
</dbReference>
<dbReference type="PDB" id="6ZIQ">
    <property type="method" value="EM"/>
    <property type="resolution" value="4.33 A"/>
    <property type="chains" value="M/N/O=62-136"/>
</dbReference>
<dbReference type="PDB" id="6ZPO">
    <property type="method" value="EM"/>
    <property type="resolution" value="4.00 A"/>
    <property type="chains" value="K/L/M/N/O/P/Q/R=62-136"/>
</dbReference>
<dbReference type="PDBsum" id="2XND"/>
<dbReference type="PDBsum" id="5ARA"/>
<dbReference type="PDBsum" id="5ARE"/>
<dbReference type="PDBsum" id="5ARH"/>
<dbReference type="PDBsum" id="5ARI"/>
<dbReference type="PDBsum" id="5FIJ"/>
<dbReference type="PDBsum" id="5FIK"/>
<dbReference type="PDBsum" id="5FIL"/>
<dbReference type="PDBsum" id="6ZBB"/>
<dbReference type="PDBsum" id="6ZIQ"/>
<dbReference type="PDBsum" id="6ZPO"/>
<dbReference type="EMDB" id="EMD-11149"/>
<dbReference type="EMDB" id="EMD-11228"/>
<dbReference type="EMDB" id="EMD-11342"/>
<dbReference type="SMR" id="P32876"/>
<dbReference type="CORUM" id="P32876"/>
<dbReference type="DIP" id="DIP-59387N"/>
<dbReference type="FunCoup" id="P32876">
    <property type="interactions" value="337"/>
</dbReference>
<dbReference type="IntAct" id="P32876">
    <property type="interactions" value="5"/>
</dbReference>
<dbReference type="STRING" id="9913.ENSBTAP00000024402"/>
<dbReference type="PaxDb" id="9913-ENSBTAP00000024402"/>
<dbReference type="Ensembl" id="ENSBTAT00000024402.5">
    <property type="protein sequence ID" value="ENSBTAP00000024402.3"/>
    <property type="gene ID" value="ENSBTAG00000018339.5"/>
</dbReference>
<dbReference type="GeneID" id="338053"/>
<dbReference type="KEGG" id="bta:338053"/>
<dbReference type="CTD" id="516"/>
<dbReference type="VEuPathDB" id="HostDB:ENSBTAG00000018339"/>
<dbReference type="VGNC" id="VGNC:103014">
    <property type="gene designation" value="ATP5MC1"/>
</dbReference>
<dbReference type="eggNOG" id="KOG3025">
    <property type="taxonomic scope" value="Eukaryota"/>
</dbReference>
<dbReference type="GeneTree" id="ENSGT00940000159720"/>
<dbReference type="HOGENOM" id="CLU_116822_1_0_1"/>
<dbReference type="InParanoid" id="P32876"/>
<dbReference type="OMA" id="CMGFCIL"/>
<dbReference type="OrthoDB" id="438052at2759"/>
<dbReference type="TreeFam" id="TF300140"/>
<dbReference type="Reactome" id="R-BTA-1268020">
    <property type="pathway name" value="Mitochondrial protein import"/>
</dbReference>
<dbReference type="Reactome" id="R-BTA-163210">
    <property type="pathway name" value="Formation of ATP by chemiosmotic coupling"/>
</dbReference>
<dbReference type="Reactome" id="R-BTA-8949613">
    <property type="pathway name" value="Cristae formation"/>
</dbReference>
<dbReference type="EvolutionaryTrace" id="P32876"/>
<dbReference type="Proteomes" id="UP000009136">
    <property type="component" value="Chromosome 19"/>
</dbReference>
<dbReference type="Bgee" id="ENSBTAG00000018339">
    <property type="expression patterns" value="Expressed in cardiac ventricle and 106 other cell types or tissues"/>
</dbReference>
<dbReference type="GO" id="GO:0031966">
    <property type="term" value="C:mitochondrial membrane"/>
    <property type="evidence" value="ECO:0007669"/>
    <property type="project" value="UniProtKB-SubCell"/>
</dbReference>
<dbReference type="GO" id="GO:0005739">
    <property type="term" value="C:mitochondrion"/>
    <property type="evidence" value="ECO:0000305"/>
    <property type="project" value="UniProtKB"/>
</dbReference>
<dbReference type="GO" id="GO:0045259">
    <property type="term" value="C:proton-transporting ATP synthase complex"/>
    <property type="evidence" value="ECO:0000314"/>
    <property type="project" value="UniProtKB"/>
</dbReference>
<dbReference type="GO" id="GO:0033177">
    <property type="term" value="C:proton-transporting two-sector ATPase complex, proton-transporting domain"/>
    <property type="evidence" value="ECO:0007669"/>
    <property type="project" value="InterPro"/>
</dbReference>
<dbReference type="GO" id="GO:0008289">
    <property type="term" value="F:lipid binding"/>
    <property type="evidence" value="ECO:0007669"/>
    <property type="project" value="UniProtKB-KW"/>
</dbReference>
<dbReference type="GO" id="GO:0015252">
    <property type="term" value="F:proton channel activity"/>
    <property type="evidence" value="ECO:0000250"/>
    <property type="project" value="UniProtKB"/>
</dbReference>
<dbReference type="GO" id="GO:0015986">
    <property type="term" value="P:proton motive force-driven ATP synthesis"/>
    <property type="evidence" value="ECO:0000250"/>
    <property type="project" value="UniProtKB"/>
</dbReference>
<dbReference type="GO" id="GO:1902600">
    <property type="term" value="P:proton transmembrane transport"/>
    <property type="evidence" value="ECO:0000250"/>
    <property type="project" value="UniProtKB"/>
</dbReference>
<dbReference type="CDD" id="cd18182">
    <property type="entry name" value="ATP-synt_Fo_c_ATP5G3"/>
    <property type="match status" value="1"/>
</dbReference>
<dbReference type="FunFam" id="1.20.20.10:FF:000003">
    <property type="entry name" value="Atp synthase f complex subunit mitochondrial"/>
    <property type="match status" value="1"/>
</dbReference>
<dbReference type="Gene3D" id="1.20.20.10">
    <property type="entry name" value="F1F0 ATP synthase subunit C"/>
    <property type="match status" value="1"/>
</dbReference>
<dbReference type="HAMAP" id="MF_01396">
    <property type="entry name" value="ATP_synth_c_bact"/>
    <property type="match status" value="1"/>
</dbReference>
<dbReference type="InterPro" id="IPR000454">
    <property type="entry name" value="ATP_synth_F0_csu"/>
</dbReference>
<dbReference type="InterPro" id="IPR020537">
    <property type="entry name" value="ATP_synth_F0_csu_DDCD_BS"/>
</dbReference>
<dbReference type="InterPro" id="IPR038662">
    <property type="entry name" value="ATP_synth_F0_csu_sf"/>
</dbReference>
<dbReference type="InterPro" id="IPR002379">
    <property type="entry name" value="ATPase_proteolipid_c-like_dom"/>
</dbReference>
<dbReference type="InterPro" id="IPR035921">
    <property type="entry name" value="F/V-ATP_Csub_sf"/>
</dbReference>
<dbReference type="PANTHER" id="PTHR10031:SF51">
    <property type="entry name" value="ATP SYNTHASE F(0) COMPLEX SUBUNIT C1, MITOCHONDRIAL"/>
    <property type="match status" value="1"/>
</dbReference>
<dbReference type="PANTHER" id="PTHR10031">
    <property type="entry name" value="ATP SYNTHASE LIPID-BINDING PROTEIN, MITOCHONDRIAL"/>
    <property type="match status" value="1"/>
</dbReference>
<dbReference type="Pfam" id="PF00137">
    <property type="entry name" value="ATP-synt_C"/>
    <property type="match status" value="1"/>
</dbReference>
<dbReference type="PRINTS" id="PR00124">
    <property type="entry name" value="ATPASEC"/>
</dbReference>
<dbReference type="SUPFAM" id="SSF81333">
    <property type="entry name" value="F1F0 ATP synthase subunit C"/>
    <property type="match status" value="1"/>
</dbReference>
<dbReference type="PROSITE" id="PS00605">
    <property type="entry name" value="ATPASE_C"/>
    <property type="match status" value="1"/>
</dbReference>
<keyword id="KW-0002">3D-structure</keyword>
<keyword id="KW-0138">CF(0)</keyword>
<keyword id="KW-0903">Direct protein sequencing</keyword>
<keyword id="KW-0375">Hydrogen ion transport</keyword>
<keyword id="KW-0406">Ion transport</keyword>
<keyword id="KW-0446">Lipid-binding</keyword>
<keyword id="KW-0472">Membrane</keyword>
<keyword id="KW-0488">Methylation</keyword>
<keyword id="KW-0496">Mitochondrion</keyword>
<keyword id="KW-1185">Reference proteome</keyword>
<keyword id="KW-0809">Transit peptide</keyword>
<keyword id="KW-0812">Transmembrane</keyword>
<keyword id="KW-1133">Transmembrane helix</keyword>
<keyword id="KW-0813">Transport</keyword>
<gene>
    <name evidence="2" type="primary">ATP5MC1</name>
    <name type="synonym">ATP5G1</name>
</gene>
<reference key="1">
    <citation type="journal article" date="1985" name="EMBO J.">
        <title>Two genes encoding the bovine mitochondrial ATP synthase proteolipid specify precursors with different import sequences and are expressed in a tissue-specific manner.</title>
        <authorList>
            <person name="Gay N.J."/>
            <person name="Walker J.E."/>
        </authorList>
    </citation>
    <scope>NUCLEOTIDE SEQUENCE [MRNA]</scope>
</reference>
<reference key="2">
    <citation type="submission" date="2005-08" db="EMBL/GenBank/DDBJ databases">
        <authorList>
            <consortium name="NIH - Mammalian Gene Collection (MGC) project"/>
        </authorList>
    </citation>
    <scope>NUCLEOTIDE SEQUENCE [LARGE SCALE MRNA]</scope>
    <source>
        <strain>Crossbred X Angus</strain>
        <tissue>Ileum</tissue>
    </source>
</reference>
<reference key="3">
    <citation type="book" date="1979" name="Function and molecular aspects of biomembrane transport">
        <title>Amino acid sequence of the ATPase proteolipid from mitochondria, chloroplasts and bacteria (wild type and mutants).</title>
        <editorList>
            <person name="Quagliariello E."/>
            <person name="Palmieri F."/>
            <person name="Papa S."/>
            <person name="Klingenberg M."/>
        </editorList>
        <authorList>
            <person name="Sebald W."/>
            <person name="Hoppe J."/>
            <person name="Wachter E."/>
        </authorList>
    </citation>
    <scope>PROTEIN SEQUENCE OF 62-136</scope>
    <source>
        <tissue>Heart</tissue>
    </source>
</reference>
<reference key="4">
    <citation type="journal article" date="1991" name="Biochemistry">
        <title>Identification of the subunits of F1F0-ATPase from bovine heart mitochondria.</title>
        <authorList>
            <person name="Walker J.E."/>
            <person name="Lutter R."/>
            <person name="Dupuis A."/>
            <person name="Runswick M.J."/>
        </authorList>
    </citation>
    <scope>PROTEIN SEQUENCE OF 62-71</scope>
    <source>
        <tissue>Heart</tissue>
    </source>
</reference>
<reference key="5">
    <citation type="journal article" date="1991" name="Vet. Res. Commun.">
        <title>Bovine ceroid-lipofuscinosis (Batten's disease): the major component stored is the DCCD-reactive proteolipid, subunit C, of mitochondrial ATP synthase.</title>
        <authorList>
            <person name="Martinus R.D."/>
            <person name="Harper P.A."/>
            <person name="Jolly R.D."/>
            <person name="Bayliss S.L."/>
            <person name="Midwinter G.G."/>
            <person name="Shaw G.J."/>
            <person name="Palmer D.N."/>
        </authorList>
    </citation>
    <scope>INVOLVEMENT IN BOVINE CEROID-LIPOFUSCINOSIS</scope>
</reference>
<reference key="6">
    <citation type="journal article" date="2007" name="FEBS Lett.">
        <title>Association of two proteolipids of unknown function with ATP synthase from bovine heart mitochondria.</title>
        <authorList>
            <person name="Chen R."/>
            <person name="Runswick M.J."/>
            <person name="Carroll J."/>
            <person name="Fearnley I.M."/>
            <person name="Walker J.E."/>
        </authorList>
    </citation>
    <scope>IDENTIFICATION IN THE ATP SYNTHASE COMPLEX</scope>
</reference>
<reference key="7">
    <citation type="journal article" date="2015" name="J. Biol. Chem.">
        <title>Organization of Subunits in the Membrane Domain of the Bovine F-ATPase Revealed by Covalent Cross-linking.</title>
        <authorList>
            <person name="Lee J."/>
            <person name="Ding S."/>
            <person name="Walpole T.B."/>
            <person name="Holding A.N."/>
            <person name="Montgomery M.G."/>
            <person name="Fearnley I.M."/>
            <person name="Walker J.E."/>
        </authorList>
    </citation>
    <scope>IDENTIFICATION IN THE ATP SYNTHASE COMPLEX</scope>
</reference>
<accession>P32876</accession>
<accession>P00839</accession>
<accession>Q3SZC8</accession>
<comment type="function">
    <text evidence="2">Subunit c, of the mitochondrial membrane ATP synthase complex (F(1)F(0) ATP synthase or Complex V) that produces ATP from ADP in the presence of a proton gradient across the membrane which is generated by electron transport complexes of the respiratory chain. ATP synthase complex consist of a soluble F(1) head domain - the catalytic core - and a membrane F(1) domain - the membrane proton channel. These two domains are linked by a central stalk rotating inside the F(1) region and a stationary peripheral stalk. During catalysis, ATP synthesis in the catalytic domain of F(1) is coupled via a rotary mechanism of the central stalk subunits to proton translocation. With the subunit a (MT-ATP6), forms the proton-conducting channel in the F(0) domain, that contains two crucial half-channels (inlet and outlet) that facilitate proton movement from the mitochondrial intermembrane space (IMS) into the matrix. Protons are taken up via the inlet half-channel and released through the outlet half-channel, following a Grotthuss mechanism.</text>
</comment>
<comment type="catalytic activity">
    <reaction evidence="2">
        <text>H(+)(in) = H(+)(out)</text>
        <dbReference type="Rhea" id="RHEA:34979"/>
        <dbReference type="ChEBI" id="CHEBI:15378"/>
    </reaction>
</comment>
<comment type="subunit">
    <text evidence="2 4 6">Homooctamer; the c-ring consists of eight c subunits forming a circle, and each subunit adopts a hairpin shape. Component of the ATP synthase complex composed at least of ATP5F1A/subunit alpha, ATP5F1B/subunit beta, ATP5MC1/subunit c (homooctomer), MT-ATP6/subunit a, MT-ATP8/subunit 8, ATP5ME/subunit e, ATP5MF/subunit f, ATP5MG/subunit g, ATP5MK/subunit k, ATP5MJ/subunit j, ATP5F1C/subunit gamma, ATP5F1D/subunit delta, ATP5F1E/subunit epsilon, ATP5PF/subunit F6, ATP5PB/subunit b, ATP5PD/subunit d, ATP5PO/subunit OSCP (PubMed:17570365, PubMed:25851905). ATP synthase complex consists of a soluble F(1) head domain (subunits alpha(3) and beta(3)) - the catalytic core - and a membrane F(0) domain - the membrane proton channel (subunits c, a, 8, e, f, g, k and j). These two domains are linked by a central stalk (subunits gamma, delta, and epsilon) rotating inside the F1 region and a stationary peripheral stalk (subunits F6, b, d, and OSCP). Interacts with TMEM70 (homooligomer form); this interaction facilitates the oligomer formation of subunit c/ATP5MC1 (c-ring) and the c-ring membrane insertion and also protects ATP5MC1 against intramitochondrial proteolysis (By similarity).</text>
</comment>
<comment type="subcellular location">
    <subcellularLocation>
        <location>Mitochondrion membrane</location>
        <topology>Multi-pass membrane protein</topology>
    </subcellularLocation>
</comment>
<comment type="PTM">
    <text evidence="2">Trimethylated by ATPSCKMT at Lys-104. Methylation is required for proper incorporation of the C subunit into the ATP synthase complex and mitochondrial respiration.</text>
</comment>
<comment type="disease">
    <text>This protein is the major protein stored in the storage bodies of animals or humans affected with ceroid lipofuscinosis (Batten disease).</text>
</comment>
<comment type="miscellaneous">
    <text>There are three genes which encode the ATP synthase proteolipid and they specify precursors with different import sequences but identical mature proteins.</text>
</comment>
<comment type="similarity">
    <text evidence="8">Belongs to the ATPase C chain family.</text>
</comment>
<name>AT5G1_BOVIN</name>
<protein>
    <recommendedName>
        <fullName evidence="2">ATP synthase F(0) complex subunit C1, mitochondrial</fullName>
    </recommendedName>
    <alternativeName>
        <fullName>ATP synthase lipid-binding protein</fullName>
    </alternativeName>
    <alternativeName>
        <fullName evidence="2">ATP synthase membrane subunit c locus 1</fullName>
    </alternativeName>
    <alternativeName>
        <fullName>ATP synthase proteolipid P1</fullName>
    </alternativeName>
    <alternativeName>
        <fullName>ATPase protein 9</fullName>
    </alternativeName>
    <alternativeName>
        <fullName>ATPase subunit c</fullName>
    </alternativeName>
    <alternativeName>
        <fullName evidence="2">Proton-conducting channel, ATP synthase F(0) complex subunit c</fullName>
    </alternativeName>
</protein>